<name>RUVC_ROSS1</name>
<proteinExistence type="inferred from homology"/>
<reference key="1">
    <citation type="submission" date="2007-04" db="EMBL/GenBank/DDBJ databases">
        <title>Complete sequence of Roseiflexus sp. RS-1.</title>
        <authorList>
            <consortium name="US DOE Joint Genome Institute"/>
            <person name="Copeland A."/>
            <person name="Lucas S."/>
            <person name="Lapidus A."/>
            <person name="Barry K."/>
            <person name="Detter J.C."/>
            <person name="Glavina del Rio T."/>
            <person name="Hammon N."/>
            <person name="Israni S."/>
            <person name="Dalin E."/>
            <person name="Tice H."/>
            <person name="Pitluck S."/>
            <person name="Chertkov O."/>
            <person name="Brettin T."/>
            <person name="Bruce D."/>
            <person name="Han C."/>
            <person name="Schmutz J."/>
            <person name="Larimer F."/>
            <person name="Land M."/>
            <person name="Hauser L."/>
            <person name="Kyrpides N."/>
            <person name="Mikhailova N."/>
            <person name="Bryant D.A."/>
            <person name="Richardson P."/>
        </authorList>
    </citation>
    <scope>NUCLEOTIDE SEQUENCE [LARGE SCALE GENOMIC DNA]</scope>
    <source>
        <strain>RS-1</strain>
    </source>
</reference>
<sequence>MTATRTIGIDPGTARMGWGVVEETDGVLRLVDCGVLTTSAELSQAERLLLLYNELRHLIEQYHPAAAAIEELFFGKNVNTALTVGQARGVVLLTLAQAGIPVYEYKPLQVKQALAGYGGADKRQMQEMVRLTLRLPAIPRPDDAADAVAVAICHTYAAPMIRRIEEGR</sequence>
<organism>
    <name type="scientific">Roseiflexus sp. (strain RS-1)</name>
    <dbReference type="NCBI Taxonomy" id="357808"/>
    <lineage>
        <taxon>Bacteria</taxon>
        <taxon>Bacillati</taxon>
        <taxon>Chloroflexota</taxon>
        <taxon>Chloroflexia</taxon>
        <taxon>Chloroflexales</taxon>
        <taxon>Roseiflexineae</taxon>
        <taxon>Roseiflexaceae</taxon>
        <taxon>Roseiflexus</taxon>
    </lineage>
</organism>
<keyword id="KW-0963">Cytoplasm</keyword>
<keyword id="KW-0227">DNA damage</keyword>
<keyword id="KW-0233">DNA recombination</keyword>
<keyword id="KW-0234">DNA repair</keyword>
<keyword id="KW-0238">DNA-binding</keyword>
<keyword id="KW-0255">Endonuclease</keyword>
<keyword id="KW-0378">Hydrolase</keyword>
<keyword id="KW-0460">Magnesium</keyword>
<keyword id="KW-0479">Metal-binding</keyword>
<keyword id="KW-0540">Nuclease</keyword>
<comment type="function">
    <text evidence="1">The RuvA-RuvB-RuvC complex processes Holliday junction (HJ) DNA during genetic recombination and DNA repair. Endonuclease that resolves HJ intermediates. Cleaves cruciform DNA by making single-stranded nicks across the HJ at symmetrical positions within the homologous arms, yielding a 5'-phosphate and a 3'-hydroxyl group; requires a central core of homology in the junction. The consensus cleavage sequence is 5'-(A/T)TT(C/G)-3'. Cleavage occurs on the 3'-side of the TT dinucleotide at the point of strand exchange. HJ branch migration catalyzed by RuvA-RuvB allows RuvC to scan DNA until it finds its consensus sequence, where it cleaves and resolves the cruciform DNA.</text>
</comment>
<comment type="catalytic activity">
    <reaction evidence="1">
        <text>Endonucleolytic cleavage at a junction such as a reciprocal single-stranded crossover between two homologous DNA duplexes (Holliday junction).</text>
        <dbReference type="EC" id="3.1.21.10"/>
    </reaction>
</comment>
<comment type="cofactor">
    <cofactor evidence="1">
        <name>Mg(2+)</name>
        <dbReference type="ChEBI" id="CHEBI:18420"/>
    </cofactor>
    <text evidence="1">Binds 2 Mg(2+) ion per subunit.</text>
</comment>
<comment type="subunit">
    <text evidence="1">Homodimer which binds Holliday junction (HJ) DNA. The HJ becomes 2-fold symmetrical on binding to RuvC with unstacked arms; it has a different conformation from HJ DNA in complex with RuvA. In the full resolvosome a probable DNA-RuvA(4)-RuvB(12)-RuvC(2) complex forms which resolves the HJ.</text>
</comment>
<comment type="subcellular location">
    <subcellularLocation>
        <location evidence="1">Cytoplasm</location>
    </subcellularLocation>
</comment>
<comment type="similarity">
    <text evidence="1">Belongs to the RuvC family.</text>
</comment>
<dbReference type="EC" id="3.1.21.10" evidence="1"/>
<dbReference type="EMBL" id="CP000686">
    <property type="protein sequence ID" value="ABQ92698.1"/>
    <property type="molecule type" value="Genomic_DNA"/>
</dbReference>
<dbReference type="SMR" id="A5V1E5"/>
<dbReference type="STRING" id="357808.RoseRS_4363"/>
<dbReference type="KEGG" id="rrs:RoseRS_4363"/>
<dbReference type="eggNOG" id="COG0817">
    <property type="taxonomic scope" value="Bacteria"/>
</dbReference>
<dbReference type="HOGENOM" id="CLU_091257_3_1_0"/>
<dbReference type="OrthoDB" id="9805499at2"/>
<dbReference type="Proteomes" id="UP000006554">
    <property type="component" value="Chromosome"/>
</dbReference>
<dbReference type="GO" id="GO:0005737">
    <property type="term" value="C:cytoplasm"/>
    <property type="evidence" value="ECO:0007669"/>
    <property type="project" value="UniProtKB-SubCell"/>
</dbReference>
<dbReference type="GO" id="GO:0048476">
    <property type="term" value="C:Holliday junction resolvase complex"/>
    <property type="evidence" value="ECO:0007669"/>
    <property type="project" value="UniProtKB-UniRule"/>
</dbReference>
<dbReference type="GO" id="GO:0008821">
    <property type="term" value="F:crossover junction DNA endonuclease activity"/>
    <property type="evidence" value="ECO:0007669"/>
    <property type="project" value="UniProtKB-UniRule"/>
</dbReference>
<dbReference type="GO" id="GO:0003677">
    <property type="term" value="F:DNA binding"/>
    <property type="evidence" value="ECO:0007669"/>
    <property type="project" value="UniProtKB-KW"/>
</dbReference>
<dbReference type="GO" id="GO:0000287">
    <property type="term" value="F:magnesium ion binding"/>
    <property type="evidence" value="ECO:0007669"/>
    <property type="project" value="UniProtKB-UniRule"/>
</dbReference>
<dbReference type="GO" id="GO:0006310">
    <property type="term" value="P:DNA recombination"/>
    <property type="evidence" value="ECO:0007669"/>
    <property type="project" value="UniProtKB-UniRule"/>
</dbReference>
<dbReference type="GO" id="GO:0006281">
    <property type="term" value="P:DNA repair"/>
    <property type="evidence" value="ECO:0007669"/>
    <property type="project" value="UniProtKB-UniRule"/>
</dbReference>
<dbReference type="CDD" id="cd16962">
    <property type="entry name" value="RuvC"/>
    <property type="match status" value="1"/>
</dbReference>
<dbReference type="FunFam" id="3.30.420.10:FF:000002">
    <property type="entry name" value="Crossover junction endodeoxyribonuclease RuvC"/>
    <property type="match status" value="1"/>
</dbReference>
<dbReference type="Gene3D" id="3.30.420.10">
    <property type="entry name" value="Ribonuclease H-like superfamily/Ribonuclease H"/>
    <property type="match status" value="1"/>
</dbReference>
<dbReference type="HAMAP" id="MF_00034">
    <property type="entry name" value="RuvC"/>
    <property type="match status" value="1"/>
</dbReference>
<dbReference type="InterPro" id="IPR012337">
    <property type="entry name" value="RNaseH-like_sf"/>
</dbReference>
<dbReference type="InterPro" id="IPR036397">
    <property type="entry name" value="RNaseH_sf"/>
</dbReference>
<dbReference type="InterPro" id="IPR020563">
    <property type="entry name" value="X-over_junc_endoDNase_Mg_BS"/>
</dbReference>
<dbReference type="InterPro" id="IPR002176">
    <property type="entry name" value="X-over_junc_endoDNase_RuvC"/>
</dbReference>
<dbReference type="NCBIfam" id="NF000711">
    <property type="entry name" value="PRK00039.2-1"/>
    <property type="match status" value="1"/>
</dbReference>
<dbReference type="NCBIfam" id="TIGR00228">
    <property type="entry name" value="ruvC"/>
    <property type="match status" value="1"/>
</dbReference>
<dbReference type="PANTHER" id="PTHR30194">
    <property type="entry name" value="CROSSOVER JUNCTION ENDODEOXYRIBONUCLEASE RUVC"/>
    <property type="match status" value="1"/>
</dbReference>
<dbReference type="PANTHER" id="PTHR30194:SF3">
    <property type="entry name" value="CROSSOVER JUNCTION ENDODEOXYRIBONUCLEASE RUVC"/>
    <property type="match status" value="1"/>
</dbReference>
<dbReference type="Pfam" id="PF02075">
    <property type="entry name" value="RuvC"/>
    <property type="match status" value="1"/>
</dbReference>
<dbReference type="PRINTS" id="PR00696">
    <property type="entry name" value="RSOLVASERUVC"/>
</dbReference>
<dbReference type="SUPFAM" id="SSF53098">
    <property type="entry name" value="Ribonuclease H-like"/>
    <property type="match status" value="1"/>
</dbReference>
<dbReference type="PROSITE" id="PS01321">
    <property type="entry name" value="RUVC"/>
    <property type="match status" value="1"/>
</dbReference>
<accession>A5V1E5</accession>
<protein>
    <recommendedName>
        <fullName evidence="1">Crossover junction endodeoxyribonuclease RuvC</fullName>
        <ecNumber evidence="1">3.1.21.10</ecNumber>
    </recommendedName>
    <alternativeName>
        <fullName evidence="1">Holliday junction nuclease RuvC</fullName>
    </alternativeName>
    <alternativeName>
        <fullName evidence="1">Holliday junction resolvase RuvC</fullName>
    </alternativeName>
</protein>
<evidence type="ECO:0000255" key="1">
    <source>
        <dbReference type="HAMAP-Rule" id="MF_00034"/>
    </source>
</evidence>
<feature type="chain" id="PRO_0000332438" description="Crossover junction endodeoxyribonuclease RuvC">
    <location>
        <begin position="1"/>
        <end position="168"/>
    </location>
</feature>
<feature type="active site" evidence="1">
    <location>
        <position position="10"/>
    </location>
</feature>
<feature type="active site" evidence="1">
    <location>
        <position position="70"/>
    </location>
</feature>
<feature type="active site" evidence="1">
    <location>
        <position position="143"/>
    </location>
</feature>
<feature type="binding site" evidence="1">
    <location>
        <position position="10"/>
    </location>
    <ligand>
        <name>Mg(2+)</name>
        <dbReference type="ChEBI" id="CHEBI:18420"/>
        <label>1</label>
    </ligand>
</feature>
<feature type="binding site" evidence="1">
    <location>
        <position position="70"/>
    </location>
    <ligand>
        <name>Mg(2+)</name>
        <dbReference type="ChEBI" id="CHEBI:18420"/>
        <label>2</label>
    </ligand>
</feature>
<feature type="binding site" evidence="1">
    <location>
        <position position="143"/>
    </location>
    <ligand>
        <name>Mg(2+)</name>
        <dbReference type="ChEBI" id="CHEBI:18420"/>
        <label>1</label>
    </ligand>
</feature>
<gene>
    <name evidence="1" type="primary">ruvC</name>
    <name type="ordered locus">RoseRS_4363</name>
</gene>